<evidence type="ECO:0000255" key="1">
    <source>
        <dbReference type="HAMAP-Rule" id="MF_00051"/>
    </source>
</evidence>
<dbReference type="EC" id="2.1.2.1" evidence="1"/>
<dbReference type="EMBL" id="CP000746">
    <property type="protein sequence ID" value="ABR74720.1"/>
    <property type="molecule type" value="Genomic_DNA"/>
</dbReference>
<dbReference type="RefSeq" id="WP_012073097.1">
    <property type="nucleotide sequence ID" value="NC_009655.1"/>
</dbReference>
<dbReference type="SMR" id="A6VP23"/>
<dbReference type="STRING" id="339671.Asuc_1360"/>
<dbReference type="KEGG" id="asu:Asuc_1360"/>
<dbReference type="eggNOG" id="COG0112">
    <property type="taxonomic scope" value="Bacteria"/>
</dbReference>
<dbReference type="HOGENOM" id="CLU_022477_2_1_6"/>
<dbReference type="OrthoDB" id="9803846at2"/>
<dbReference type="UniPathway" id="UPA00193"/>
<dbReference type="UniPathway" id="UPA00288">
    <property type="reaction ID" value="UER01023"/>
</dbReference>
<dbReference type="Proteomes" id="UP000001114">
    <property type="component" value="Chromosome"/>
</dbReference>
<dbReference type="GO" id="GO:0005829">
    <property type="term" value="C:cytosol"/>
    <property type="evidence" value="ECO:0007669"/>
    <property type="project" value="TreeGrafter"/>
</dbReference>
<dbReference type="GO" id="GO:0004372">
    <property type="term" value="F:glycine hydroxymethyltransferase activity"/>
    <property type="evidence" value="ECO:0007669"/>
    <property type="project" value="UniProtKB-UniRule"/>
</dbReference>
<dbReference type="GO" id="GO:0030170">
    <property type="term" value="F:pyridoxal phosphate binding"/>
    <property type="evidence" value="ECO:0007669"/>
    <property type="project" value="UniProtKB-UniRule"/>
</dbReference>
<dbReference type="GO" id="GO:0019264">
    <property type="term" value="P:glycine biosynthetic process from serine"/>
    <property type="evidence" value="ECO:0007669"/>
    <property type="project" value="UniProtKB-UniRule"/>
</dbReference>
<dbReference type="GO" id="GO:0035999">
    <property type="term" value="P:tetrahydrofolate interconversion"/>
    <property type="evidence" value="ECO:0007669"/>
    <property type="project" value="UniProtKB-UniRule"/>
</dbReference>
<dbReference type="CDD" id="cd00378">
    <property type="entry name" value="SHMT"/>
    <property type="match status" value="1"/>
</dbReference>
<dbReference type="FunFam" id="3.40.640.10:FF:000001">
    <property type="entry name" value="Serine hydroxymethyltransferase"/>
    <property type="match status" value="1"/>
</dbReference>
<dbReference type="FunFam" id="3.90.1150.10:FF:000003">
    <property type="entry name" value="Serine hydroxymethyltransferase"/>
    <property type="match status" value="1"/>
</dbReference>
<dbReference type="Gene3D" id="3.90.1150.10">
    <property type="entry name" value="Aspartate Aminotransferase, domain 1"/>
    <property type="match status" value="1"/>
</dbReference>
<dbReference type="Gene3D" id="3.40.640.10">
    <property type="entry name" value="Type I PLP-dependent aspartate aminotransferase-like (Major domain)"/>
    <property type="match status" value="1"/>
</dbReference>
<dbReference type="HAMAP" id="MF_00051">
    <property type="entry name" value="SHMT"/>
    <property type="match status" value="1"/>
</dbReference>
<dbReference type="InterPro" id="IPR015424">
    <property type="entry name" value="PyrdxlP-dep_Trfase"/>
</dbReference>
<dbReference type="InterPro" id="IPR015421">
    <property type="entry name" value="PyrdxlP-dep_Trfase_major"/>
</dbReference>
<dbReference type="InterPro" id="IPR015422">
    <property type="entry name" value="PyrdxlP-dep_Trfase_small"/>
</dbReference>
<dbReference type="InterPro" id="IPR001085">
    <property type="entry name" value="Ser_HO-MeTrfase"/>
</dbReference>
<dbReference type="InterPro" id="IPR049943">
    <property type="entry name" value="Ser_HO-MeTrfase-like"/>
</dbReference>
<dbReference type="InterPro" id="IPR019798">
    <property type="entry name" value="Ser_HO-MeTrfase_PLP_BS"/>
</dbReference>
<dbReference type="InterPro" id="IPR039429">
    <property type="entry name" value="SHMT-like_dom"/>
</dbReference>
<dbReference type="NCBIfam" id="NF000586">
    <property type="entry name" value="PRK00011.1"/>
    <property type="match status" value="1"/>
</dbReference>
<dbReference type="PANTHER" id="PTHR11680">
    <property type="entry name" value="SERINE HYDROXYMETHYLTRANSFERASE"/>
    <property type="match status" value="1"/>
</dbReference>
<dbReference type="PANTHER" id="PTHR11680:SF50">
    <property type="entry name" value="SERINE HYDROXYMETHYLTRANSFERASE"/>
    <property type="match status" value="1"/>
</dbReference>
<dbReference type="Pfam" id="PF00464">
    <property type="entry name" value="SHMT"/>
    <property type="match status" value="1"/>
</dbReference>
<dbReference type="PIRSF" id="PIRSF000412">
    <property type="entry name" value="SHMT"/>
    <property type="match status" value="1"/>
</dbReference>
<dbReference type="SUPFAM" id="SSF53383">
    <property type="entry name" value="PLP-dependent transferases"/>
    <property type="match status" value="1"/>
</dbReference>
<dbReference type="PROSITE" id="PS00096">
    <property type="entry name" value="SHMT"/>
    <property type="match status" value="1"/>
</dbReference>
<organism>
    <name type="scientific">Actinobacillus succinogenes (strain ATCC 55618 / DSM 22257 / CCUG 43843 / 130Z)</name>
    <dbReference type="NCBI Taxonomy" id="339671"/>
    <lineage>
        <taxon>Bacteria</taxon>
        <taxon>Pseudomonadati</taxon>
        <taxon>Pseudomonadota</taxon>
        <taxon>Gammaproteobacteria</taxon>
        <taxon>Pasteurellales</taxon>
        <taxon>Pasteurellaceae</taxon>
        <taxon>Actinobacillus</taxon>
    </lineage>
</organism>
<name>GLYA_ACTSZ</name>
<sequence>MLEKKTIAELDPVLWDAMQNEVRRQEEHIELIASENYVTPAVMQAQGSQLTNKYAEGYPGKRYYGGCEYVDIVEQLAIDRAKELFGAEYANVQPHSGSQANAAVYGALLSAGDTILGMDLAHGGHLTHGAKVSFSGKIYNSVLYGITADGVIDYADVRTKALESKPKMIVAGFSAYSQVIDWAKMREIADEVDAYLFVDMAHVAGLIAAGLYPNPLPHAHVVTTTTHKTLAGPRGGLILSACGDEDIYKKLNSSVFPANQGGPLMHVIAAKAVCFKEALEPSFKVYQAQVLKNAKAMVEVFKQRGFDVVSNGTENHLFLVSFIKQGLTGKQADAALGAANITVNKNSVPNDPQKPFVTSGIRVGSPSITRRGFSETDAATLAGWMCDVLESIGKDNHEQVIAETKTKVLDICKRLPVYGIGR</sequence>
<keyword id="KW-0028">Amino-acid biosynthesis</keyword>
<keyword id="KW-0963">Cytoplasm</keyword>
<keyword id="KW-0554">One-carbon metabolism</keyword>
<keyword id="KW-0663">Pyridoxal phosphate</keyword>
<keyword id="KW-1185">Reference proteome</keyword>
<keyword id="KW-0808">Transferase</keyword>
<reference key="1">
    <citation type="journal article" date="2010" name="BMC Genomics">
        <title>A genomic perspective on the potential of Actinobacillus succinogenes for industrial succinate production.</title>
        <authorList>
            <person name="McKinlay J.B."/>
            <person name="Laivenieks M."/>
            <person name="Schindler B.D."/>
            <person name="McKinlay A.A."/>
            <person name="Siddaramappa S."/>
            <person name="Challacombe J.F."/>
            <person name="Lowry S.R."/>
            <person name="Clum A."/>
            <person name="Lapidus A.L."/>
            <person name="Burkhart K.B."/>
            <person name="Harkins V."/>
            <person name="Vieille C."/>
        </authorList>
    </citation>
    <scope>NUCLEOTIDE SEQUENCE [LARGE SCALE GENOMIC DNA]</scope>
    <source>
        <strain>ATCC 55618 / DSM 22257 / CCUG 43843 / 130Z</strain>
    </source>
</reference>
<gene>
    <name evidence="1" type="primary">glyA</name>
    <name type="ordered locus">Asuc_1360</name>
</gene>
<comment type="function">
    <text evidence="1">Catalyzes the reversible interconversion of serine and glycine with tetrahydrofolate (THF) serving as the one-carbon carrier. This reaction serves as the major source of one-carbon groups required for the biosynthesis of purines, thymidylate, methionine, and other important biomolecules. Also exhibits THF-independent aldolase activity toward beta-hydroxyamino acids, producing glycine and aldehydes, via a retro-aldol mechanism.</text>
</comment>
<comment type="catalytic activity">
    <reaction evidence="1">
        <text>(6R)-5,10-methylene-5,6,7,8-tetrahydrofolate + glycine + H2O = (6S)-5,6,7,8-tetrahydrofolate + L-serine</text>
        <dbReference type="Rhea" id="RHEA:15481"/>
        <dbReference type="ChEBI" id="CHEBI:15377"/>
        <dbReference type="ChEBI" id="CHEBI:15636"/>
        <dbReference type="ChEBI" id="CHEBI:33384"/>
        <dbReference type="ChEBI" id="CHEBI:57305"/>
        <dbReference type="ChEBI" id="CHEBI:57453"/>
        <dbReference type="EC" id="2.1.2.1"/>
    </reaction>
</comment>
<comment type="cofactor">
    <cofactor evidence="1">
        <name>pyridoxal 5'-phosphate</name>
        <dbReference type="ChEBI" id="CHEBI:597326"/>
    </cofactor>
</comment>
<comment type="pathway">
    <text evidence="1">One-carbon metabolism; tetrahydrofolate interconversion.</text>
</comment>
<comment type="pathway">
    <text evidence="1">Amino-acid biosynthesis; glycine biosynthesis; glycine from L-serine: step 1/1.</text>
</comment>
<comment type="subunit">
    <text evidence="1">Homodimer.</text>
</comment>
<comment type="subcellular location">
    <subcellularLocation>
        <location evidence="1">Cytoplasm</location>
    </subcellularLocation>
</comment>
<comment type="similarity">
    <text evidence="1">Belongs to the SHMT family.</text>
</comment>
<accession>A6VP23</accession>
<protein>
    <recommendedName>
        <fullName evidence="1">Serine hydroxymethyltransferase</fullName>
        <shortName evidence="1">SHMT</shortName>
        <shortName evidence="1">Serine methylase</shortName>
        <ecNumber evidence="1">2.1.2.1</ecNumber>
    </recommendedName>
</protein>
<proteinExistence type="inferred from homology"/>
<feature type="chain" id="PRO_1000071128" description="Serine hydroxymethyltransferase">
    <location>
        <begin position="1"/>
        <end position="422"/>
    </location>
</feature>
<feature type="binding site" evidence="1">
    <location>
        <position position="120"/>
    </location>
    <ligand>
        <name>(6S)-5,6,7,8-tetrahydrofolate</name>
        <dbReference type="ChEBI" id="CHEBI:57453"/>
    </ligand>
</feature>
<feature type="binding site" evidence="1">
    <location>
        <begin position="124"/>
        <end position="126"/>
    </location>
    <ligand>
        <name>(6S)-5,6,7,8-tetrahydrofolate</name>
        <dbReference type="ChEBI" id="CHEBI:57453"/>
    </ligand>
</feature>
<feature type="site" description="Plays an important role in substrate specificity" evidence="1">
    <location>
        <position position="227"/>
    </location>
</feature>
<feature type="modified residue" description="N6-(pyridoxal phosphate)lysine" evidence="1">
    <location>
        <position position="228"/>
    </location>
</feature>